<reference key="1">
    <citation type="journal article" date="2000" name="Nature">
        <title>Complete DNA sequence of a serogroup A strain of Neisseria meningitidis Z2491.</title>
        <authorList>
            <person name="Parkhill J."/>
            <person name="Achtman M."/>
            <person name="James K.D."/>
            <person name="Bentley S.D."/>
            <person name="Churcher C.M."/>
            <person name="Klee S.R."/>
            <person name="Morelli G."/>
            <person name="Basham D."/>
            <person name="Brown D."/>
            <person name="Chillingworth T."/>
            <person name="Davies R.M."/>
            <person name="Davis P."/>
            <person name="Devlin K."/>
            <person name="Feltwell T."/>
            <person name="Hamlin N."/>
            <person name="Holroyd S."/>
            <person name="Jagels K."/>
            <person name="Leather S."/>
            <person name="Moule S."/>
            <person name="Mungall K.L."/>
            <person name="Quail M.A."/>
            <person name="Rajandream M.A."/>
            <person name="Rutherford K.M."/>
            <person name="Simmonds M."/>
            <person name="Skelton J."/>
            <person name="Whitehead S."/>
            <person name="Spratt B.G."/>
            <person name="Barrell B.G."/>
        </authorList>
    </citation>
    <scope>NUCLEOTIDE SEQUENCE [LARGE SCALE GENOMIC DNA]</scope>
    <source>
        <strain>DSM 15465 / Z2491</strain>
    </source>
</reference>
<keyword id="KW-0066">ATP synthesis</keyword>
<keyword id="KW-0997">Cell inner membrane</keyword>
<keyword id="KW-1003">Cell membrane</keyword>
<keyword id="KW-0139">CF(1)</keyword>
<keyword id="KW-0375">Hydrogen ion transport</keyword>
<keyword id="KW-0406">Ion transport</keyword>
<keyword id="KW-0472">Membrane</keyword>
<keyword id="KW-0813">Transport</keyword>
<organism>
    <name type="scientific">Neisseria meningitidis serogroup A / serotype 4A (strain DSM 15465 / Z2491)</name>
    <dbReference type="NCBI Taxonomy" id="122587"/>
    <lineage>
        <taxon>Bacteria</taxon>
        <taxon>Pseudomonadati</taxon>
        <taxon>Pseudomonadota</taxon>
        <taxon>Betaproteobacteria</taxon>
        <taxon>Neisseriales</taxon>
        <taxon>Neisseriaceae</taxon>
        <taxon>Neisseria</taxon>
    </lineage>
</organism>
<feature type="chain" id="PRO_0000188167" description="ATP synthase epsilon chain">
    <location>
        <begin position="1"/>
        <end position="140"/>
    </location>
</feature>
<proteinExistence type="inferred from homology"/>
<name>ATPE_NEIMA</name>
<comment type="function">
    <text evidence="1">Produces ATP from ADP in the presence of a proton gradient across the membrane.</text>
</comment>
<comment type="subunit">
    <text>F-type ATPases have 2 components, CF(1) - the catalytic core - and CF(0) - the membrane proton channel. CF(1) has five subunits: alpha(3), beta(3), gamma(1), delta(1), epsilon(1). CF(0) has three main subunits: a, b and c.</text>
</comment>
<comment type="subcellular location">
    <subcellularLocation>
        <location evidence="1">Cell inner membrane</location>
        <topology evidence="1">Peripheral membrane protein</topology>
    </subcellularLocation>
</comment>
<comment type="similarity">
    <text evidence="1">Belongs to the ATPase epsilon chain family.</text>
</comment>
<accession>Q9JW69</accession>
<accession>A1IPX6</accession>
<sequence>MSIMQVEVVSSEQKIYSGEATFIVVPTVQGELGIYPRHEPIMSLVRLGALRLTVLGEDKEVLVAVSGGVLEVQPDKVTVLADVAVRSAEMDQARAEEAKKAAEAGISQAKDDKALAEAHKALAAAIAQLKTLDYIRSHKK</sequence>
<dbReference type="EMBL" id="AL157959">
    <property type="protein sequence ID" value="CAM07797.1"/>
    <property type="molecule type" value="Genomic_DNA"/>
</dbReference>
<dbReference type="PIR" id="D81970">
    <property type="entry name" value="D81970"/>
</dbReference>
<dbReference type="RefSeq" id="WP_002247173.1">
    <property type="nucleotide sequence ID" value="NC_003116.1"/>
</dbReference>
<dbReference type="SMR" id="Q9JW69"/>
<dbReference type="EnsemblBacteria" id="CAM07797">
    <property type="protein sequence ID" value="CAM07797"/>
    <property type="gene ID" value="NMA0520"/>
</dbReference>
<dbReference type="GeneID" id="93386839"/>
<dbReference type="KEGG" id="nma:NMA0520"/>
<dbReference type="HOGENOM" id="CLU_084338_2_0_4"/>
<dbReference type="Proteomes" id="UP000000626">
    <property type="component" value="Chromosome"/>
</dbReference>
<dbReference type="GO" id="GO:0005886">
    <property type="term" value="C:plasma membrane"/>
    <property type="evidence" value="ECO:0007669"/>
    <property type="project" value="UniProtKB-SubCell"/>
</dbReference>
<dbReference type="GO" id="GO:0045259">
    <property type="term" value="C:proton-transporting ATP synthase complex"/>
    <property type="evidence" value="ECO:0007669"/>
    <property type="project" value="UniProtKB-KW"/>
</dbReference>
<dbReference type="GO" id="GO:0005524">
    <property type="term" value="F:ATP binding"/>
    <property type="evidence" value="ECO:0007669"/>
    <property type="project" value="UniProtKB-UniRule"/>
</dbReference>
<dbReference type="GO" id="GO:0046933">
    <property type="term" value="F:proton-transporting ATP synthase activity, rotational mechanism"/>
    <property type="evidence" value="ECO:0007669"/>
    <property type="project" value="UniProtKB-UniRule"/>
</dbReference>
<dbReference type="CDD" id="cd12152">
    <property type="entry name" value="F1-ATPase_delta"/>
    <property type="match status" value="1"/>
</dbReference>
<dbReference type="Gene3D" id="2.60.15.10">
    <property type="entry name" value="F0F1 ATP synthase delta/epsilon subunit, N-terminal"/>
    <property type="match status" value="1"/>
</dbReference>
<dbReference type="HAMAP" id="MF_00530">
    <property type="entry name" value="ATP_synth_epsil_bac"/>
    <property type="match status" value="1"/>
</dbReference>
<dbReference type="InterPro" id="IPR036794">
    <property type="entry name" value="ATP_F1_dsu/esu_C_sf"/>
</dbReference>
<dbReference type="InterPro" id="IPR001469">
    <property type="entry name" value="ATP_synth_F1_dsu/esu"/>
</dbReference>
<dbReference type="InterPro" id="IPR020546">
    <property type="entry name" value="ATP_synth_F1_dsu/esu_N"/>
</dbReference>
<dbReference type="InterPro" id="IPR020547">
    <property type="entry name" value="ATP_synth_F1_esu_C"/>
</dbReference>
<dbReference type="InterPro" id="IPR036771">
    <property type="entry name" value="ATPsynth_dsu/esu_N"/>
</dbReference>
<dbReference type="NCBIfam" id="TIGR01216">
    <property type="entry name" value="ATP_synt_epsi"/>
    <property type="match status" value="1"/>
</dbReference>
<dbReference type="NCBIfam" id="NF001847">
    <property type="entry name" value="PRK00571.1-4"/>
    <property type="match status" value="1"/>
</dbReference>
<dbReference type="PANTHER" id="PTHR13822">
    <property type="entry name" value="ATP SYNTHASE DELTA/EPSILON CHAIN"/>
    <property type="match status" value="1"/>
</dbReference>
<dbReference type="PANTHER" id="PTHR13822:SF10">
    <property type="entry name" value="ATP SYNTHASE EPSILON CHAIN, CHLOROPLASTIC"/>
    <property type="match status" value="1"/>
</dbReference>
<dbReference type="Pfam" id="PF00401">
    <property type="entry name" value="ATP-synt_DE"/>
    <property type="match status" value="1"/>
</dbReference>
<dbReference type="Pfam" id="PF02823">
    <property type="entry name" value="ATP-synt_DE_N"/>
    <property type="match status" value="1"/>
</dbReference>
<dbReference type="SUPFAM" id="SSF46604">
    <property type="entry name" value="Epsilon subunit of F1F0-ATP synthase C-terminal domain"/>
    <property type="match status" value="1"/>
</dbReference>
<dbReference type="SUPFAM" id="SSF51344">
    <property type="entry name" value="Epsilon subunit of F1F0-ATP synthase N-terminal domain"/>
    <property type="match status" value="1"/>
</dbReference>
<gene>
    <name evidence="1" type="primary">atpC</name>
    <name type="ordered locus">NMA0520</name>
</gene>
<evidence type="ECO:0000255" key="1">
    <source>
        <dbReference type="HAMAP-Rule" id="MF_00530"/>
    </source>
</evidence>
<protein>
    <recommendedName>
        <fullName evidence="1">ATP synthase epsilon chain</fullName>
    </recommendedName>
    <alternativeName>
        <fullName evidence="1">ATP synthase F1 sector epsilon subunit</fullName>
    </alternativeName>
    <alternativeName>
        <fullName evidence="1">F-ATPase epsilon subunit</fullName>
    </alternativeName>
</protein>